<gene>
    <name evidence="16 20" type="primary">Ythdc2</name>
</gene>
<keyword id="KW-0040">ANK repeat</keyword>
<keyword id="KW-0067">ATP-binding</keyword>
<keyword id="KW-0963">Cytoplasm</keyword>
<keyword id="KW-0221">Differentiation</keyword>
<keyword id="KW-0347">Helicase</keyword>
<keyword id="KW-0378">Hydrolase</keyword>
<keyword id="KW-0469">Meiosis</keyword>
<keyword id="KW-0547">Nucleotide-binding</keyword>
<keyword id="KW-0896">Oogenesis</keyword>
<keyword id="KW-0597">Phosphoprotein</keyword>
<keyword id="KW-1185">Reference proteome</keyword>
<keyword id="KW-0677">Repeat</keyword>
<keyword id="KW-0694">RNA-binding</keyword>
<keyword id="KW-0744">Spermatogenesis</keyword>
<sequence>MSRPSSVSPRPPAPSGGGTGGGGGGSGGGGGGGGGGPASCGPGGGGRAKGLKDIRIDEEVKIAVNIALERFRYGDQREMEFPSSLTSTERAFIHRLSQSLGLVSKSKGKGANRYLTVKKKDGSETAHAMMTCNLTHNTKHAVRSLIQRFPVTNKERTELLPKTERGNVFAVEAENREMSKTSGRLNNGIPQVPVKRGESEFDSFRQSLPVFEKQEEIVKIIKENKVVLIVGETGSGKTTQIPQFLLDDCFKNGIPCRIFCTQPRRLAAIAVAERVAAERRERIGQTIGYQIRLESRVSPKTLLTFCTNGVLLRTLMAGDSTLSTVTHVIVDEVHERDRFSDFLLTKLRDLLQKHPTLKLILSSAALDVNLFIRYFGSCPVIYIQGRPFEVKEMFLEDILRTTGYTNKEMLKYKKEKQREEKQQTTLTEWYSAQENTFKPESQRQRAVASVSEEYDLLDDGGDAVFSQLTEKDVNCLEPWLIKEMDACLSDIWLHKDVDAFAQVFHLILTENVSVDYRHSETSATALMVAAGRGFTSQVEQLISMGANVHSKASNGWMALDWAKHFGQTEIVDLLESYSASLEFGNLDESSLVQTNGNDLSAEDRELLKAYHHSFDDEKVDLDLIMHLLYNICHSCDAGAILIFLPGYDEIVGLRDRILFDDKRFADNTHRYQVFMLHSNMQTSDQKKVLKNPPAGVRKIILSTNIAETSITVNDVVFVIDSGKVKEKSFDALNFVTMLKMVWISKASAIQRKGRAGRCRPGICFRLFSRLRFQNMLEFQTPELLRMPLQELCLHTKLLAPVNCTIADFLMKAPEPPPALIVRNAVQMLKTIDAMDAWEDLTELGYHLADLPVEPHLGKMVLCAVVLKCLDPILTIACTLAYRDPFVLPTQASQKRAAMLCRKRFTAGTFSDHMALLRAFQAWQKARSDGWERAFCEKNFLSQATMEIIIGMRTQLLGQLRASGFVRARGGGDIRDVNTNSENWAVVKAALVAGMYPNLVHVDRENVILTGPKEKKVRFHPTSVLSQPQYKKIPPANGQAAAIQALPTDWLIYDEMTRAHRIANIRCCSAVTPVTVLVFCGPARLASNALQEPSSFRADGIPNDSSDSEMEDRTTANLAALKLDEWLNFKLEPEAASLLLQLRQKWHSLFLRRMRAPSKPWSQVDEATIRAIIAVLSTEEQSAGLQQPSGIGQRPRPMSSEELPLASSWRSNNSRKSTADTEFADGSTTGERVLMKSPSPALHPPQKYKDRGILHPKRSTDDRSDQSSVKSTDSSSYPSPCASPSPPSSGKGSKSPSPRPNMPIRYFIMKSSNLRNLEISQQKGIWSTTPSNERKLNRAFWESSMVYLVFSVQGSGHFQGFSRMSSEIGREKSQDWGSAGLGGVFKVEWIRKESLPFQFAHHLLNPWNDNKKVQISRDGQELEPQVGEQLLQLWERLPLGEKTTSD</sequence>
<name>YTDC2_MOUSE</name>
<comment type="function">
    <text evidence="9 10 11 12 13 14">3'-5' RNA helicase that plays a key role in the male and female germline by promoting transition from mitotic to meiotic divisions in stem cells (PubMed:28380054, PubMed:28809393, PubMed:29033321, PubMed:29087293, PubMed:29360036, PubMed:32470506). Specifically recognizes and binds N6-methyladenosine (m6A)-containing RNAs, a modification present at internal sites of mRNAs and some non-coding RNAs that plays a role in the efficiency of RNA processing and stability (PubMed:29360036). Essential for ensuring a successful progression of the meiotic program in the germline by regulating the level of m6A-containing RNAs (PubMed:29033321). Acts by binding and promoting degradation of m6A-containing mRNAs: the 3'-5' RNA helicase activity is required for this process and RNA degradation may be mediated by XRN1 exoribonuclease (PubMed:29033321). Required for both spermatogenesis and oogenesis (PubMed:28809393, PubMed:29033321).</text>
</comment>
<comment type="catalytic activity">
    <reaction evidence="13">
        <text>ATP + H2O = ADP + phosphate + H(+)</text>
        <dbReference type="Rhea" id="RHEA:13065"/>
        <dbReference type="ChEBI" id="CHEBI:15377"/>
        <dbReference type="ChEBI" id="CHEBI:15378"/>
        <dbReference type="ChEBI" id="CHEBI:30616"/>
        <dbReference type="ChEBI" id="CHEBI:43474"/>
        <dbReference type="ChEBI" id="CHEBI:456216"/>
        <dbReference type="EC" id="3.6.4.13"/>
    </reaction>
</comment>
<comment type="subunit">
    <text evidence="2 9 12 15">Interacts with MEIOC; binds transcripts that regulate the mitotic cell cycle inhibiting progression into metaphase, thereby allowing meiotic prophase to proceed normally (PubMed:28380054, PubMed:29087293). Interacts (via ANK repeats) with XRN1 (By similarity). Interacts with ZCCHC4 (By similarity). Associates with the small ribosomal subunit (By similarity). Interacts with RBM46 (PubMed:36001654).</text>
</comment>
<comment type="interaction">
    <interactant intactId="EBI-8572369">
        <id>B2RR83</id>
    </interactant>
    <interactant intactId="EBI-11664020">
        <id>A2AG06</id>
        <label>Meioc</label>
    </interactant>
    <organismsDiffer>false</organismsDiffer>
    <experiments>4</experiments>
</comment>
<comment type="subcellular location">
    <subcellularLocation>
        <location evidence="11 12 13">Cytoplasm</location>
    </subcellularLocation>
    <subcellularLocation>
        <location evidence="2">Cytoplasm</location>
        <location evidence="2">Perinuclear region</location>
    </subcellularLocation>
</comment>
<comment type="tissue specificity">
    <text evidence="10 11 12 13 14">Present in male and female germ cells (at protein level) (PubMed:29033321, PubMed:32470506). Highly expressed in testis (PubMed:28809393, PubMed:29033321, PubMed:29087293, PubMed:29360036). Not detected in spermatogonia next to the tubule wall but is strongly expressed in spermatocytes, suggesting that it is up-regulated in germ cells upon entry into meiosis (at protein level) (PubMed:29087293).</text>
</comment>
<comment type="developmental stage">
    <text evidence="10">Expression rises between 7 and 12 d.p.p. and remains steady through adulthood.</text>
</comment>
<comment type="domain">
    <text evidence="2">The YTH domain mediates RNA-binding. It recognizes and binds N6-methyladenosine (m6A)-containing RNAs.</text>
</comment>
<comment type="disruption phenotype">
    <text evidence="10 11 12 13">Mice are viable and reach adulthood (PubMed:28809393, PubMed:29033321, PubMed:29087293). However, both male and female mice are infertile; male mice have smaller testes, and female mice have smaller ovaries and show progressive loss of germ cells (PubMed:28809393, PubMed:29033321, PubMed:29087293). Mutant germ cells enter meiosis but proceed prematurely to aberrant metaphase and apoptosis, and display defects in transitioning from spermatogonial to meiotic gene expression programs (PubMed:29033321, PubMed:29087293). Mutant testes reveal an up-regulation of N6-methyladenosine (m6A)-enriched transcripts (PubMed:29033321).</text>
</comment>
<comment type="miscellaneous">
    <text evidence="18">'Ketu' is a harbinger of misfortune in Vedic mythology (PubMed:29360036).</text>
</comment>
<comment type="similarity">
    <text evidence="19">Belongs to the DEAD box helicase family. DEAH subfamily.</text>
</comment>
<proteinExistence type="evidence at protein level"/>
<dbReference type="EC" id="3.6.4.13" evidence="13"/>
<dbReference type="EMBL" id="BC138263">
    <property type="protein sequence ID" value="AAI38264.1"/>
    <property type="molecule type" value="mRNA"/>
</dbReference>
<dbReference type="EMBL" id="BC171951">
    <property type="protein sequence ID" value="AAI71951.1"/>
    <property type="molecule type" value="mRNA"/>
</dbReference>
<dbReference type="CCDS" id="CCDS50278.1"/>
<dbReference type="RefSeq" id="NP_001156485.1">
    <property type="nucleotide sequence ID" value="NM_001163013.2"/>
</dbReference>
<dbReference type="SMR" id="B2RR83"/>
<dbReference type="BioGRID" id="232185">
    <property type="interactions" value="9"/>
</dbReference>
<dbReference type="FunCoup" id="B2RR83">
    <property type="interactions" value="2904"/>
</dbReference>
<dbReference type="IntAct" id="B2RR83">
    <property type="interactions" value="4"/>
</dbReference>
<dbReference type="MINT" id="B2RR83"/>
<dbReference type="STRING" id="10090.ENSMUSP00000048340"/>
<dbReference type="GlyGen" id="B2RR83">
    <property type="glycosylation" value="2 sites, 1 N-linked glycan (1 site)"/>
</dbReference>
<dbReference type="iPTMnet" id="B2RR83"/>
<dbReference type="PhosphoSitePlus" id="B2RR83"/>
<dbReference type="SwissPalm" id="B2RR83"/>
<dbReference type="PaxDb" id="10090-ENSMUSP00000048340"/>
<dbReference type="PeptideAtlas" id="B2RR83"/>
<dbReference type="ProteomicsDB" id="275234"/>
<dbReference type="Pumba" id="B2RR83"/>
<dbReference type="Antibodypedia" id="48855">
    <property type="antibodies" value="45 antibodies from 17 providers"/>
</dbReference>
<dbReference type="Ensembl" id="ENSMUST00000037763.11">
    <property type="protein sequence ID" value="ENSMUSP00000048340.8"/>
    <property type="gene ID" value="ENSMUSG00000034653.12"/>
</dbReference>
<dbReference type="GeneID" id="240255"/>
<dbReference type="KEGG" id="mmu:240255"/>
<dbReference type="UCSC" id="uc008evb.2">
    <property type="organism name" value="mouse"/>
</dbReference>
<dbReference type="AGR" id="MGI:2448561"/>
<dbReference type="CTD" id="64848"/>
<dbReference type="MGI" id="MGI:2448561">
    <property type="gene designation" value="Ythdc2"/>
</dbReference>
<dbReference type="VEuPathDB" id="HostDB:ENSMUSG00000034653"/>
<dbReference type="eggNOG" id="KOG0920">
    <property type="taxonomic scope" value="Eukaryota"/>
</dbReference>
<dbReference type="eggNOG" id="KOG0922">
    <property type="taxonomic scope" value="Eukaryota"/>
</dbReference>
<dbReference type="eggNOG" id="KOG1902">
    <property type="taxonomic scope" value="Eukaryota"/>
</dbReference>
<dbReference type="GeneTree" id="ENSGT00940000155826"/>
<dbReference type="HOGENOM" id="CLU_001832_1_6_1"/>
<dbReference type="InParanoid" id="B2RR83"/>
<dbReference type="OMA" id="EWIKRAN"/>
<dbReference type="OrthoDB" id="6103986at2759"/>
<dbReference type="PhylomeDB" id="B2RR83"/>
<dbReference type="TreeFam" id="TF318311"/>
<dbReference type="BioGRID-ORCS" id="240255">
    <property type="hits" value="2 hits in 77 CRISPR screens"/>
</dbReference>
<dbReference type="CD-CODE" id="CE726F99">
    <property type="entry name" value="Postsynaptic density"/>
</dbReference>
<dbReference type="CD-CODE" id="DE1E139C">
    <property type="entry name" value="Chromatoid body"/>
</dbReference>
<dbReference type="ChiTaRS" id="Ythdc2">
    <property type="organism name" value="mouse"/>
</dbReference>
<dbReference type="PRO" id="PR:B2RR83"/>
<dbReference type="Proteomes" id="UP000000589">
    <property type="component" value="Chromosome 18"/>
</dbReference>
<dbReference type="RNAct" id="B2RR83">
    <property type="molecule type" value="protein"/>
</dbReference>
<dbReference type="Bgee" id="ENSMUSG00000034653">
    <property type="expression patterns" value="Expressed in secondary oocyte and 225 other cell types or tissues"/>
</dbReference>
<dbReference type="ExpressionAtlas" id="B2RR83">
    <property type="expression patterns" value="baseline and differential"/>
</dbReference>
<dbReference type="GO" id="GO:0005737">
    <property type="term" value="C:cytoplasm"/>
    <property type="evidence" value="ECO:0000314"/>
    <property type="project" value="UniProtKB"/>
</dbReference>
<dbReference type="GO" id="GO:0005783">
    <property type="term" value="C:endoplasmic reticulum"/>
    <property type="evidence" value="ECO:0007669"/>
    <property type="project" value="Ensembl"/>
</dbReference>
<dbReference type="GO" id="GO:0048471">
    <property type="term" value="C:perinuclear region of cytoplasm"/>
    <property type="evidence" value="ECO:0007669"/>
    <property type="project" value="UniProtKB-SubCell"/>
</dbReference>
<dbReference type="GO" id="GO:0035770">
    <property type="term" value="C:ribonucleoprotein granule"/>
    <property type="evidence" value="ECO:0000314"/>
    <property type="project" value="UniProtKB"/>
</dbReference>
<dbReference type="GO" id="GO:0034458">
    <property type="term" value="F:3'-5' RNA helicase activity"/>
    <property type="evidence" value="ECO:0000314"/>
    <property type="project" value="UniProtKB"/>
</dbReference>
<dbReference type="GO" id="GO:0005524">
    <property type="term" value="F:ATP binding"/>
    <property type="evidence" value="ECO:0007669"/>
    <property type="project" value="UniProtKB-KW"/>
</dbReference>
<dbReference type="GO" id="GO:0016887">
    <property type="term" value="F:ATP hydrolysis activity"/>
    <property type="evidence" value="ECO:0007669"/>
    <property type="project" value="RHEA"/>
</dbReference>
<dbReference type="GO" id="GO:1990247">
    <property type="term" value="F:N6-methyladenosine-containing RNA reader activity"/>
    <property type="evidence" value="ECO:0000314"/>
    <property type="project" value="UniProtKB"/>
</dbReference>
<dbReference type="GO" id="GO:0003723">
    <property type="term" value="F:RNA binding"/>
    <property type="evidence" value="ECO:0000314"/>
    <property type="project" value="UniProtKB"/>
</dbReference>
<dbReference type="GO" id="GO:0070063">
    <property type="term" value="F:RNA polymerase binding"/>
    <property type="evidence" value="ECO:0007669"/>
    <property type="project" value="Ensembl"/>
</dbReference>
<dbReference type="GO" id="GO:0051729">
    <property type="term" value="P:germline cell cycle switching, mitotic to meiotic cell cycle"/>
    <property type="evidence" value="ECO:0000315"/>
    <property type="project" value="UniProtKB"/>
</dbReference>
<dbReference type="GO" id="GO:0051321">
    <property type="term" value="P:meiotic cell cycle"/>
    <property type="evidence" value="ECO:0007669"/>
    <property type="project" value="UniProtKB-KW"/>
</dbReference>
<dbReference type="GO" id="GO:0048599">
    <property type="term" value="P:oocyte development"/>
    <property type="evidence" value="ECO:0000315"/>
    <property type="project" value="UniProtKB"/>
</dbReference>
<dbReference type="GO" id="GO:0044829">
    <property type="term" value="P:positive regulation by host of viral genome replication"/>
    <property type="evidence" value="ECO:0007669"/>
    <property type="project" value="Ensembl"/>
</dbReference>
<dbReference type="GO" id="GO:0070555">
    <property type="term" value="P:response to interleukin-1"/>
    <property type="evidence" value="ECO:0007669"/>
    <property type="project" value="Ensembl"/>
</dbReference>
<dbReference type="GO" id="GO:0034612">
    <property type="term" value="P:response to tumor necrosis factor"/>
    <property type="evidence" value="ECO:0007669"/>
    <property type="project" value="Ensembl"/>
</dbReference>
<dbReference type="GO" id="GO:0007286">
    <property type="term" value="P:spermatid development"/>
    <property type="evidence" value="ECO:0000315"/>
    <property type="project" value="UniProtKB"/>
</dbReference>
<dbReference type="CDD" id="cd17987">
    <property type="entry name" value="DEXHc_YTHDC2"/>
    <property type="match status" value="1"/>
</dbReference>
<dbReference type="CDD" id="cd06007">
    <property type="entry name" value="R3H_DEXH_helicase"/>
    <property type="match status" value="1"/>
</dbReference>
<dbReference type="CDD" id="cd18791">
    <property type="entry name" value="SF2_C_RHA"/>
    <property type="match status" value="1"/>
</dbReference>
<dbReference type="CDD" id="cd21134">
    <property type="entry name" value="YTH"/>
    <property type="match status" value="1"/>
</dbReference>
<dbReference type="FunFam" id="1.20.120.1080:FF:000008">
    <property type="entry name" value="probable ATP-dependent RNA helicase YTHDC2"/>
    <property type="match status" value="1"/>
</dbReference>
<dbReference type="FunFam" id="3.10.590.10:FF:000004">
    <property type="entry name" value="probable ATP-dependent RNA helicase YTHDC2"/>
    <property type="match status" value="1"/>
</dbReference>
<dbReference type="FunFam" id="3.30.1370.50:FF:000005">
    <property type="entry name" value="probable ATP-dependent RNA helicase YTHDC2"/>
    <property type="match status" value="1"/>
</dbReference>
<dbReference type="FunFam" id="3.40.50.300:FF:000284">
    <property type="entry name" value="probable ATP-dependent RNA helicase YTHDC2"/>
    <property type="match status" value="1"/>
</dbReference>
<dbReference type="FunFam" id="3.40.50.300:FF:000811">
    <property type="entry name" value="probable ATP-dependent RNA helicase YTHDC2"/>
    <property type="match status" value="1"/>
</dbReference>
<dbReference type="FunFam" id="1.25.40.20:FF:000492">
    <property type="entry name" value="YTH domain-containing 2"/>
    <property type="match status" value="1"/>
</dbReference>
<dbReference type="Gene3D" id="1.20.120.1080">
    <property type="match status" value="1"/>
</dbReference>
<dbReference type="Gene3D" id="1.25.40.20">
    <property type="entry name" value="Ankyrin repeat-containing domain"/>
    <property type="match status" value="1"/>
</dbReference>
<dbReference type="Gene3D" id="3.40.50.300">
    <property type="entry name" value="P-loop containing nucleotide triphosphate hydrolases"/>
    <property type="match status" value="2"/>
</dbReference>
<dbReference type="Gene3D" id="3.10.590.10">
    <property type="entry name" value="ph1033 like domains"/>
    <property type="match status" value="1"/>
</dbReference>
<dbReference type="Gene3D" id="3.30.1370.50">
    <property type="entry name" value="R3H-like domain"/>
    <property type="match status" value="1"/>
</dbReference>
<dbReference type="InterPro" id="IPR002110">
    <property type="entry name" value="Ankyrin_rpt"/>
</dbReference>
<dbReference type="InterPro" id="IPR036770">
    <property type="entry name" value="Ankyrin_rpt-contain_sf"/>
</dbReference>
<dbReference type="InterPro" id="IPR011709">
    <property type="entry name" value="DEAD-box_helicase_OB_fold"/>
</dbReference>
<dbReference type="InterPro" id="IPR011545">
    <property type="entry name" value="DEAD/DEAH_box_helicase_dom"/>
</dbReference>
<dbReference type="InterPro" id="IPR048333">
    <property type="entry name" value="HA2_WH"/>
</dbReference>
<dbReference type="InterPro" id="IPR007502">
    <property type="entry name" value="Helicase-assoc_dom"/>
</dbReference>
<dbReference type="InterPro" id="IPR014001">
    <property type="entry name" value="Helicase_ATP-bd"/>
</dbReference>
<dbReference type="InterPro" id="IPR001650">
    <property type="entry name" value="Helicase_C-like"/>
</dbReference>
<dbReference type="InterPro" id="IPR027417">
    <property type="entry name" value="P-loop_NTPase"/>
</dbReference>
<dbReference type="InterPro" id="IPR034083">
    <property type="entry name" value="R3H_DEXH_helicase"/>
</dbReference>
<dbReference type="InterPro" id="IPR001374">
    <property type="entry name" value="R3H_dom"/>
</dbReference>
<dbReference type="InterPro" id="IPR036867">
    <property type="entry name" value="R3H_dom_sf"/>
</dbReference>
<dbReference type="InterPro" id="IPR007275">
    <property type="entry name" value="YTH_domain"/>
</dbReference>
<dbReference type="PANTHER" id="PTHR18934:SF213">
    <property type="entry name" value="3'-5' RNA HELICASE YTHDC2"/>
    <property type="match status" value="1"/>
</dbReference>
<dbReference type="PANTHER" id="PTHR18934">
    <property type="entry name" value="ATP-DEPENDENT RNA HELICASE"/>
    <property type="match status" value="1"/>
</dbReference>
<dbReference type="Pfam" id="PF00270">
    <property type="entry name" value="DEAD"/>
    <property type="match status" value="1"/>
</dbReference>
<dbReference type="Pfam" id="PF21010">
    <property type="entry name" value="HA2_C"/>
    <property type="match status" value="1"/>
</dbReference>
<dbReference type="Pfam" id="PF04408">
    <property type="entry name" value="HA2_N"/>
    <property type="match status" value="1"/>
</dbReference>
<dbReference type="Pfam" id="PF00271">
    <property type="entry name" value="Helicase_C"/>
    <property type="match status" value="1"/>
</dbReference>
<dbReference type="Pfam" id="PF07717">
    <property type="entry name" value="OB_NTP_bind"/>
    <property type="match status" value="1"/>
</dbReference>
<dbReference type="Pfam" id="PF01424">
    <property type="entry name" value="R3H"/>
    <property type="match status" value="1"/>
</dbReference>
<dbReference type="Pfam" id="PF04146">
    <property type="entry name" value="YTH"/>
    <property type="match status" value="1"/>
</dbReference>
<dbReference type="SMART" id="SM00487">
    <property type="entry name" value="DEXDc"/>
    <property type="match status" value="1"/>
</dbReference>
<dbReference type="SMART" id="SM00847">
    <property type="entry name" value="HA2"/>
    <property type="match status" value="1"/>
</dbReference>
<dbReference type="SMART" id="SM00490">
    <property type="entry name" value="HELICc"/>
    <property type="match status" value="1"/>
</dbReference>
<dbReference type="SMART" id="SM00393">
    <property type="entry name" value="R3H"/>
    <property type="match status" value="1"/>
</dbReference>
<dbReference type="SUPFAM" id="SSF48403">
    <property type="entry name" value="Ankyrin repeat"/>
    <property type="match status" value="1"/>
</dbReference>
<dbReference type="SUPFAM" id="SSF52540">
    <property type="entry name" value="P-loop containing nucleoside triphosphate hydrolases"/>
    <property type="match status" value="2"/>
</dbReference>
<dbReference type="SUPFAM" id="SSF82708">
    <property type="entry name" value="R3H domain"/>
    <property type="match status" value="1"/>
</dbReference>
<dbReference type="PROSITE" id="PS50297">
    <property type="entry name" value="ANK_REP_REGION"/>
    <property type="match status" value="1"/>
</dbReference>
<dbReference type="PROSITE" id="PS50088">
    <property type="entry name" value="ANK_REPEAT"/>
    <property type="match status" value="1"/>
</dbReference>
<dbReference type="PROSITE" id="PS51192">
    <property type="entry name" value="HELICASE_ATP_BIND_1"/>
    <property type="match status" value="1"/>
</dbReference>
<dbReference type="PROSITE" id="PS51194">
    <property type="entry name" value="HELICASE_CTER"/>
    <property type="match status" value="1"/>
</dbReference>
<dbReference type="PROSITE" id="PS51061">
    <property type="entry name" value="R3H"/>
    <property type="match status" value="1"/>
</dbReference>
<dbReference type="PROSITE" id="PS50882">
    <property type="entry name" value="YTH"/>
    <property type="match status" value="1"/>
</dbReference>
<feature type="chain" id="PRO_0000378275" description="3'-5' RNA helicase YTHDC2">
    <location>
        <begin position="1"/>
        <end position="1445"/>
    </location>
</feature>
<feature type="domain" description="R3H" evidence="5">
    <location>
        <begin position="53"/>
        <end position="121"/>
    </location>
</feature>
<feature type="domain" description="Helicase ATP-binding" evidence="6">
    <location>
        <begin position="218"/>
        <end position="384"/>
    </location>
</feature>
<feature type="repeat" description="ANK 1">
    <location>
        <begin position="521"/>
        <end position="553"/>
    </location>
</feature>
<feature type="repeat" description="ANK 2">
    <location>
        <begin position="554"/>
        <end position="586"/>
    </location>
</feature>
<feature type="domain" description="Helicase C-terminal" evidence="7">
    <location>
        <begin position="627"/>
        <end position="799"/>
    </location>
</feature>
<feature type="domain" description="YTH" evidence="4">
    <location>
        <begin position="1303"/>
        <end position="1433"/>
    </location>
</feature>
<feature type="region of interest" description="Disordered" evidence="8">
    <location>
        <begin position="1"/>
        <end position="50"/>
    </location>
</feature>
<feature type="region of interest" description="Disordered" evidence="8">
    <location>
        <begin position="1179"/>
        <end position="1303"/>
    </location>
</feature>
<feature type="short sequence motif" description="DEAH box">
    <location>
        <begin position="331"/>
        <end position="334"/>
    </location>
</feature>
<feature type="compositionally biased region" description="Gly residues" evidence="8">
    <location>
        <begin position="15"/>
        <end position="48"/>
    </location>
</feature>
<feature type="compositionally biased region" description="Polar residues" evidence="8">
    <location>
        <begin position="1179"/>
        <end position="1189"/>
    </location>
</feature>
<feature type="compositionally biased region" description="Basic and acidic residues" evidence="8">
    <location>
        <begin position="1246"/>
        <end position="1264"/>
    </location>
</feature>
<feature type="compositionally biased region" description="Low complexity" evidence="8">
    <location>
        <begin position="1265"/>
        <end position="1279"/>
    </location>
</feature>
<feature type="binding site" evidence="6">
    <location>
        <begin position="231"/>
        <end position="238"/>
    </location>
    <ligand>
        <name>ATP</name>
        <dbReference type="ChEBI" id="CHEBI:30616"/>
    </ligand>
</feature>
<feature type="binding site" evidence="3">
    <location>
        <begin position="1309"/>
        <end position="1311"/>
    </location>
    <ligand>
        <name>RNA</name>
        <dbReference type="ChEBI" id="CHEBI:33697"/>
    </ligand>
    <ligandPart>
        <name>N(6)-methyladenosine 5'-phosphate residue</name>
        <dbReference type="ChEBI" id="CHEBI:74449"/>
    </ligandPart>
</feature>
<feature type="binding site" evidence="1">
    <location>
        <position position="1325"/>
    </location>
    <ligand>
        <name>RNA</name>
        <dbReference type="ChEBI" id="CHEBI:33697"/>
    </ligand>
    <ligandPart>
        <name>N(6)-methyladenosine 5'-phosphate residue</name>
        <dbReference type="ChEBI" id="CHEBI:74449"/>
    </ligandPart>
</feature>
<feature type="binding site" evidence="1">
    <location>
        <position position="1375"/>
    </location>
    <ligand>
        <name>RNA</name>
        <dbReference type="ChEBI" id="CHEBI:33697"/>
    </ligand>
    <ligandPart>
        <name>N(6)-methyladenosine 5'-phosphate residue</name>
        <dbReference type="ChEBI" id="CHEBI:74449"/>
    </ligandPart>
</feature>
<feature type="modified residue" description="Phosphoserine" evidence="22">
    <location>
        <position position="1104"/>
    </location>
</feature>
<feature type="modified residue" description="Phosphoserine" evidence="22">
    <location>
        <position position="1105"/>
    </location>
</feature>
<feature type="modified residue" description="Phosphoserine" evidence="22">
    <location>
        <position position="1107"/>
    </location>
</feature>
<feature type="modified residue" description="Phosphoserine" evidence="21 22">
    <location>
        <position position="1278"/>
    </location>
</feature>
<feature type="modified residue" description="Phosphoserine" evidence="21 22">
    <location>
        <position position="1282"/>
    </location>
</feature>
<feature type="modified residue" description="Phosphoserine" evidence="22">
    <location>
        <position position="1296"/>
    </location>
</feature>
<feature type="mutagenesis site" description="In ketu; homozygotes mice are both male- and female-sterile. In the testis, mutant germ cells carry out an abortive attempt at meiosis: They express hallmark meiotic proteins and initiate recombination, but fail to fully extinguish the spermatogonial mitotic division program, proceed prematurely to an aberrant metaphase-like state, and undergo apoptosis. The mutation probably causes misfolding or protein aggregation. Slightly reduced helicase activity." evidence="13">
    <original>H</original>
    <variation>R</variation>
    <location>
        <position position="327"/>
    </location>
</feature>
<evidence type="ECO:0000250" key="1">
    <source>
        <dbReference type="UniProtKB" id="Q96MU7"/>
    </source>
</evidence>
<evidence type="ECO:0000250" key="2">
    <source>
        <dbReference type="UniProtKB" id="Q9H6S0"/>
    </source>
</evidence>
<evidence type="ECO:0000250" key="3">
    <source>
        <dbReference type="UniProtKB" id="Q9Y5A9"/>
    </source>
</evidence>
<evidence type="ECO:0000255" key="4">
    <source>
        <dbReference type="PROSITE-ProRule" id="PRU00225"/>
    </source>
</evidence>
<evidence type="ECO:0000255" key="5">
    <source>
        <dbReference type="PROSITE-ProRule" id="PRU00382"/>
    </source>
</evidence>
<evidence type="ECO:0000255" key="6">
    <source>
        <dbReference type="PROSITE-ProRule" id="PRU00541"/>
    </source>
</evidence>
<evidence type="ECO:0000255" key="7">
    <source>
        <dbReference type="PROSITE-ProRule" id="PRU00542"/>
    </source>
</evidence>
<evidence type="ECO:0000256" key="8">
    <source>
        <dbReference type="SAM" id="MobiDB-lite"/>
    </source>
</evidence>
<evidence type="ECO:0000269" key="9">
    <source>
    </source>
</evidence>
<evidence type="ECO:0000269" key="10">
    <source>
    </source>
</evidence>
<evidence type="ECO:0000269" key="11">
    <source>
    </source>
</evidence>
<evidence type="ECO:0000269" key="12">
    <source>
    </source>
</evidence>
<evidence type="ECO:0000269" key="13">
    <source>
    </source>
</evidence>
<evidence type="ECO:0000269" key="14">
    <source>
    </source>
</evidence>
<evidence type="ECO:0000269" key="15">
    <source>
    </source>
</evidence>
<evidence type="ECO:0000303" key="16">
    <source>
    </source>
</evidence>
<evidence type="ECO:0000303" key="17">
    <source>
    </source>
</evidence>
<evidence type="ECO:0000303" key="18">
    <source>
    </source>
</evidence>
<evidence type="ECO:0000305" key="19"/>
<evidence type="ECO:0000312" key="20">
    <source>
        <dbReference type="MGI" id="MGI:2448561"/>
    </source>
</evidence>
<evidence type="ECO:0007744" key="21">
    <source>
    </source>
</evidence>
<evidence type="ECO:0007744" key="22">
    <source>
    </source>
</evidence>
<reference key="1">
    <citation type="journal article" date="2004" name="Genome Res.">
        <title>The status, quality, and expansion of the NIH full-length cDNA project: the Mammalian Gene Collection (MGC).</title>
        <authorList>
            <consortium name="The MGC Project Team"/>
        </authorList>
    </citation>
    <scope>NUCLEOTIDE SEQUENCE [LARGE SCALE MRNA]</scope>
    <source>
        <tissue>Brain</tissue>
    </source>
</reference>
<reference key="2">
    <citation type="journal article" date="2007" name="Proc. Natl. Acad. Sci. U.S.A.">
        <title>Large-scale phosphorylation analysis of mouse liver.</title>
        <authorList>
            <person name="Villen J."/>
            <person name="Beausoleil S.A."/>
            <person name="Gerber S.A."/>
            <person name="Gygi S.P."/>
        </authorList>
    </citation>
    <scope>PHOSPHORYLATION [LARGE SCALE ANALYSIS] AT SER-1278 AND SER-1282</scope>
    <scope>IDENTIFICATION BY MASS SPECTROMETRY [LARGE SCALE ANALYSIS]</scope>
    <source>
        <tissue>Liver</tissue>
    </source>
</reference>
<reference key="3">
    <citation type="journal article" date="2010" name="Cell">
        <title>A tissue-specific atlas of mouse protein phosphorylation and expression.</title>
        <authorList>
            <person name="Huttlin E.L."/>
            <person name="Jedrychowski M.P."/>
            <person name="Elias J.E."/>
            <person name="Goswami T."/>
            <person name="Rad R."/>
            <person name="Beausoleil S.A."/>
            <person name="Villen J."/>
            <person name="Haas W."/>
            <person name="Sowa M.E."/>
            <person name="Gygi S.P."/>
        </authorList>
    </citation>
    <scope>PHOSPHORYLATION [LARGE SCALE ANALYSIS] AT SER-1104; SER-1105; SER-1107; SER-1278; SER-1282 AND SER-1296</scope>
    <scope>IDENTIFICATION BY MASS SPECTROMETRY [LARGE SCALE ANALYSIS]</scope>
    <source>
        <tissue>Brain</tissue>
        <tissue>Heart</tissue>
        <tissue>Kidney</tissue>
        <tissue>Lung</tissue>
        <tissue>Pancreas</tissue>
        <tissue>Spleen</tissue>
        <tissue>Testis</tissue>
    </source>
</reference>
<reference key="4">
    <citation type="journal article" date="2017" name="Cell Res.">
        <title>Ythdc2 is an N(6)-methyladenosine binding protein that regulates mammalian spermatogenesis.</title>
        <authorList>
            <person name="Hsu P.J."/>
            <person name="Zhu Y."/>
            <person name="Ma H."/>
            <person name="Guo Y."/>
            <person name="Shi X."/>
            <person name="Liu Y."/>
            <person name="Qi M."/>
            <person name="Lu Z."/>
            <person name="Shi H."/>
            <person name="Wang J."/>
            <person name="Cheng Y."/>
            <person name="Luo G."/>
            <person name="Dai Q."/>
            <person name="Liu M."/>
            <person name="Guo X."/>
            <person name="Sha J."/>
            <person name="Shen B."/>
            <person name="He C."/>
        </authorList>
    </citation>
    <scope>FUNCTION</scope>
    <scope>TISSUE SPECIFICITY</scope>
    <scope>DISRUPTION PHENOTYPE</scope>
    <scope>DEVELOPMENTAL STAGE</scope>
</reference>
<reference key="5">
    <citation type="journal article" date="2017" name="PLoS Genet.">
        <title>Meioc maintains an extended meiotic prophase I in mice.</title>
        <authorList>
            <person name="Soh Y.Q.S."/>
            <person name="Mikedis M.M."/>
            <person name="Kojima M."/>
            <person name="Godfrey A.K."/>
            <person name="de Rooij D.G."/>
            <person name="Page D.C."/>
        </authorList>
    </citation>
    <scope>FUNCTION</scope>
    <scope>INTERACTION WITH MEIOC</scope>
</reference>
<reference key="6">
    <citation type="journal article" date="2017" name="Elife">
        <title>The conserved RNA helicase YTHDC2 regulates the transition from proliferation to differentiation in the germline.</title>
        <authorList>
            <person name="Bailey A.S."/>
            <person name="Batista P.J."/>
            <person name="Gold R.S."/>
            <person name="Chen Y.G."/>
            <person name="de Rooij D.G."/>
            <person name="Chang H.Y."/>
            <person name="Fuller M.T."/>
        </authorList>
    </citation>
    <scope>FUNCTION</scope>
    <scope>SUBCELLULAR LOCATION</scope>
    <scope>TISSUE SPECIFICITY</scope>
    <scope>DISRUPTION PHENOTYPE</scope>
    <scope>RNA-BINDING</scope>
    <scope>INTERACTION WITH MEIOC</scope>
</reference>
<reference key="7">
    <citation type="journal article" date="2017" name="Mol. Cell">
        <title>Regulation of m6A transcripts by the 3'-5' RNA helicase YTHDC2 is essential for a successful meiotic program in the mammalian germline.</title>
        <authorList>
            <person name="Wojtas M.N."/>
            <person name="Pandey R.R."/>
            <person name="Mendel M."/>
            <person name="Homolka D."/>
            <person name="Sachidanandam R."/>
            <person name="Pillai R.S."/>
        </authorList>
    </citation>
    <scope>FUNCTION</scope>
    <scope>SUBCELLULAR LOCATION</scope>
    <scope>TISSUE SPECIFICITY</scope>
    <scope>DISRUPTION PHENOTYPE</scope>
    <scope>INTERACTION WITH XRN1 AND MEIOC</scope>
</reference>
<reference key="8">
    <citation type="journal article" date="2018" name="Elife">
        <title>Ketu mutant mice uncover an essential meiotic function for the ancient RNA helicase YTHDC2.</title>
        <authorList>
            <person name="Jain D."/>
            <person name="Puno M.R."/>
            <person name="Meydan C."/>
            <person name="Lailler N."/>
            <person name="Mason C.E."/>
            <person name="Lima C.D."/>
            <person name="Anderson K.V."/>
            <person name="Keeney S."/>
        </authorList>
    </citation>
    <scope>FUNCTION</scope>
    <scope>CATALYTIC ACTIVITY</scope>
    <scope>SUBCELLULAR LOCATION</scope>
    <scope>TISSUE SPECIFICITY</scope>
    <scope>MUTAGENESIS OF HIS-327</scope>
</reference>
<reference key="9">
    <citation type="journal article" date="2020" name="Gene">
        <title>Critical roles of mRNA m6A modification and YTHDC2 expression for meiotic initiation and progression in female germ cells.</title>
        <authorList>
            <person name="Zeng M."/>
            <person name="Dai X."/>
            <person name="Liang Z."/>
            <person name="Sun R."/>
            <person name="Huang S."/>
            <person name="Luo L."/>
            <person name="Li Z."/>
        </authorList>
    </citation>
    <scope>FUNCTION</scope>
    <scope>TISSUE SPECIFICITY</scope>
</reference>
<reference key="10">
    <citation type="journal article" date="2022" name="Sci. Adv.">
        <title>RNA binding protein RBM46 regulates mitotic-to-meiotic transition in spermatogenesis.</title>
        <authorList>
            <person name="Qian B."/>
            <person name="Li Y."/>
            <person name="Yan R."/>
            <person name="Han S."/>
            <person name="Bu Z."/>
            <person name="Gong J."/>
            <person name="Zheng B."/>
            <person name="Yuan Z."/>
            <person name="Ren S."/>
            <person name="He Q."/>
            <person name="Zhang J."/>
            <person name="Xu C."/>
            <person name="Wang R."/>
            <person name="Sun Z."/>
            <person name="Lin M."/>
            <person name="Zhou J."/>
            <person name="Ye L."/>
        </authorList>
    </citation>
    <scope>INTERACTION WITH RBM46</scope>
</reference>
<accession>B2RR83</accession>
<protein>
    <recommendedName>
        <fullName evidence="19">3'-5' RNA helicase YTHDC2</fullName>
        <ecNumber evidence="13">3.6.4.13</ecNumber>
    </recommendedName>
    <alternativeName>
        <fullName evidence="18">Keen to exit meiosis leaving testes under-populated protein</fullName>
        <shortName evidence="18">Ketu</shortName>
    </alternativeName>
    <alternativeName>
        <fullName evidence="16">YTH domain-containing protein C2</fullName>
        <shortName evidence="17">mYTHDC2</shortName>
    </alternativeName>
</protein>
<organism>
    <name type="scientific">Mus musculus</name>
    <name type="common">Mouse</name>
    <dbReference type="NCBI Taxonomy" id="10090"/>
    <lineage>
        <taxon>Eukaryota</taxon>
        <taxon>Metazoa</taxon>
        <taxon>Chordata</taxon>
        <taxon>Craniata</taxon>
        <taxon>Vertebrata</taxon>
        <taxon>Euteleostomi</taxon>
        <taxon>Mammalia</taxon>
        <taxon>Eutheria</taxon>
        <taxon>Euarchontoglires</taxon>
        <taxon>Glires</taxon>
        <taxon>Rodentia</taxon>
        <taxon>Myomorpha</taxon>
        <taxon>Muroidea</taxon>
        <taxon>Muridae</taxon>
        <taxon>Murinae</taxon>
        <taxon>Mus</taxon>
        <taxon>Mus</taxon>
    </lineage>
</organism>